<accession>Q2JK61</accession>
<gene>
    <name evidence="1" type="primary">fbp</name>
    <name type="ordered locus">CYB_1986</name>
</gene>
<feature type="chain" id="PRO_0000364730" description="Fructose-1,6-bisphosphatase class 1">
    <location>
        <begin position="1"/>
        <end position="332"/>
    </location>
</feature>
<feature type="binding site" evidence="1">
    <location>
        <position position="94"/>
    </location>
    <ligand>
        <name>Mg(2+)</name>
        <dbReference type="ChEBI" id="CHEBI:18420"/>
        <label>1</label>
    </ligand>
</feature>
<feature type="binding site" evidence="1">
    <location>
        <position position="116"/>
    </location>
    <ligand>
        <name>Mg(2+)</name>
        <dbReference type="ChEBI" id="CHEBI:18420"/>
        <label>1</label>
    </ligand>
</feature>
<feature type="binding site" evidence="1">
    <location>
        <position position="116"/>
    </location>
    <ligand>
        <name>Mg(2+)</name>
        <dbReference type="ChEBI" id="CHEBI:18420"/>
        <label>2</label>
    </ligand>
</feature>
<feature type="binding site" evidence="1">
    <location>
        <position position="118"/>
    </location>
    <ligand>
        <name>Mg(2+)</name>
        <dbReference type="ChEBI" id="CHEBI:18420"/>
        <label>1</label>
    </ligand>
</feature>
<feature type="binding site" evidence="1">
    <location>
        <begin position="119"/>
        <end position="122"/>
    </location>
    <ligand>
        <name>substrate</name>
    </ligand>
</feature>
<feature type="binding site" evidence="1">
    <location>
        <position position="119"/>
    </location>
    <ligand>
        <name>Mg(2+)</name>
        <dbReference type="ChEBI" id="CHEBI:18420"/>
        <label>2</label>
    </ligand>
</feature>
<feature type="binding site" evidence="1">
    <location>
        <position position="211"/>
    </location>
    <ligand>
        <name>substrate</name>
    </ligand>
</feature>
<feature type="binding site" evidence="1">
    <location>
        <position position="239"/>
    </location>
    <ligand>
        <name>substrate</name>
    </ligand>
</feature>
<feature type="binding site" evidence="1">
    <location>
        <begin position="257"/>
        <end position="259"/>
    </location>
    <ligand>
        <name>substrate</name>
    </ligand>
</feature>
<feature type="binding site" evidence="1">
    <location>
        <position position="269"/>
    </location>
    <ligand>
        <name>substrate</name>
    </ligand>
</feature>
<feature type="binding site" evidence="1">
    <location>
        <position position="275"/>
    </location>
    <ligand>
        <name>Mg(2+)</name>
        <dbReference type="ChEBI" id="CHEBI:18420"/>
        <label>2</label>
    </ligand>
</feature>
<evidence type="ECO:0000255" key="1">
    <source>
        <dbReference type="HAMAP-Rule" id="MF_01855"/>
    </source>
</evidence>
<name>F16PA_SYNJB</name>
<proteinExistence type="inferred from homology"/>
<reference key="1">
    <citation type="journal article" date="2007" name="ISME J.">
        <title>Population level functional diversity in a microbial community revealed by comparative genomic and metagenomic analyses.</title>
        <authorList>
            <person name="Bhaya D."/>
            <person name="Grossman A.R."/>
            <person name="Steunou A.-S."/>
            <person name="Khuri N."/>
            <person name="Cohan F.M."/>
            <person name="Hamamura N."/>
            <person name="Melendrez M.C."/>
            <person name="Bateson M.M."/>
            <person name="Ward D.M."/>
            <person name="Heidelberg J.F."/>
        </authorList>
    </citation>
    <scope>NUCLEOTIDE SEQUENCE [LARGE SCALE GENOMIC DNA]</scope>
    <source>
        <strain>JA-2-3B'a(2-13)</strain>
    </source>
</reference>
<sequence length="332" mass="36557">MLRDVLTLSRHVLQQFGSFTAEAQDFSALMNRIALAGKMIARRLSQAGLIEGALGVTGSLNVQGEEQQQMDDYANRAFIRALEQTGLVCRLVSEEMKTPARLPENCSLSRLALMIDPLDGSSNIDANLSVGSIFSVLHPLEDRPEADNQDLLQPGRRQLAAGYILYGPSTQLVYSVGKGVHGFTLDPSLGEFILSRSDIRIPERGSVYSLNEGYFCQWSEGIQNYVRYVHRRDGYISRYSGALVADFHRILLQGGVYLYPGTQKKPEGKLRLMYEANPLAFLAEQAGGAATTGTEAILDIVPQSLHQRVPLIIGSRENVEEVLRCLEGSLVP</sequence>
<protein>
    <recommendedName>
        <fullName evidence="1">Fructose-1,6-bisphosphatase class 1</fullName>
        <shortName evidence="1">FBPase class 1</shortName>
        <ecNumber evidence="1">3.1.3.11</ecNumber>
    </recommendedName>
    <alternativeName>
        <fullName evidence="1">D-fructose-1,6-bisphosphate 1-phosphohydrolase class 1</fullName>
    </alternativeName>
</protein>
<comment type="catalytic activity">
    <reaction evidence="1">
        <text>beta-D-fructose 1,6-bisphosphate + H2O = beta-D-fructose 6-phosphate + phosphate</text>
        <dbReference type="Rhea" id="RHEA:11064"/>
        <dbReference type="ChEBI" id="CHEBI:15377"/>
        <dbReference type="ChEBI" id="CHEBI:32966"/>
        <dbReference type="ChEBI" id="CHEBI:43474"/>
        <dbReference type="ChEBI" id="CHEBI:57634"/>
        <dbReference type="EC" id="3.1.3.11"/>
    </reaction>
</comment>
<comment type="cofactor">
    <cofactor evidence="1">
        <name>Mg(2+)</name>
        <dbReference type="ChEBI" id="CHEBI:18420"/>
    </cofactor>
    <text evidence="1">Binds 2 magnesium ions per subunit.</text>
</comment>
<comment type="pathway">
    <text evidence="1">Carbohydrate biosynthesis; Calvin cycle.</text>
</comment>
<comment type="subunit">
    <text evidence="1">Homotetramer.</text>
</comment>
<comment type="subcellular location">
    <subcellularLocation>
        <location evidence="1">Cytoplasm</location>
    </subcellularLocation>
</comment>
<comment type="similarity">
    <text evidence="1">Belongs to the FBPase class 1 family.</text>
</comment>
<organism>
    <name type="scientific">Synechococcus sp. (strain JA-2-3B'a(2-13))</name>
    <name type="common">Cyanobacteria bacterium Yellowstone B-Prime</name>
    <dbReference type="NCBI Taxonomy" id="321332"/>
    <lineage>
        <taxon>Bacteria</taxon>
        <taxon>Bacillati</taxon>
        <taxon>Cyanobacteriota</taxon>
        <taxon>Cyanophyceae</taxon>
        <taxon>Synechococcales</taxon>
        <taxon>Synechococcaceae</taxon>
        <taxon>Synechococcus</taxon>
    </lineage>
</organism>
<dbReference type="EC" id="3.1.3.11" evidence="1"/>
<dbReference type="EMBL" id="CP000240">
    <property type="protein sequence ID" value="ABD02934.1"/>
    <property type="molecule type" value="Genomic_DNA"/>
</dbReference>
<dbReference type="RefSeq" id="WP_011433573.1">
    <property type="nucleotide sequence ID" value="NC_007776.1"/>
</dbReference>
<dbReference type="SMR" id="Q2JK61"/>
<dbReference type="STRING" id="321332.CYB_1986"/>
<dbReference type="KEGG" id="cyb:CYB_1986"/>
<dbReference type="eggNOG" id="COG0158">
    <property type="taxonomic scope" value="Bacteria"/>
</dbReference>
<dbReference type="HOGENOM" id="CLU_039977_2_2_3"/>
<dbReference type="OrthoDB" id="9806756at2"/>
<dbReference type="UniPathway" id="UPA00116"/>
<dbReference type="Proteomes" id="UP000001938">
    <property type="component" value="Chromosome"/>
</dbReference>
<dbReference type="GO" id="GO:0005829">
    <property type="term" value="C:cytosol"/>
    <property type="evidence" value="ECO:0007669"/>
    <property type="project" value="TreeGrafter"/>
</dbReference>
<dbReference type="GO" id="GO:0042132">
    <property type="term" value="F:fructose 1,6-bisphosphate 1-phosphatase activity"/>
    <property type="evidence" value="ECO:0007669"/>
    <property type="project" value="UniProtKB-UniRule"/>
</dbReference>
<dbReference type="GO" id="GO:0000287">
    <property type="term" value="F:magnesium ion binding"/>
    <property type="evidence" value="ECO:0007669"/>
    <property type="project" value="UniProtKB-UniRule"/>
</dbReference>
<dbReference type="GO" id="GO:0030388">
    <property type="term" value="P:fructose 1,6-bisphosphate metabolic process"/>
    <property type="evidence" value="ECO:0007669"/>
    <property type="project" value="TreeGrafter"/>
</dbReference>
<dbReference type="GO" id="GO:0006002">
    <property type="term" value="P:fructose 6-phosphate metabolic process"/>
    <property type="evidence" value="ECO:0007669"/>
    <property type="project" value="TreeGrafter"/>
</dbReference>
<dbReference type="GO" id="GO:0006000">
    <property type="term" value="P:fructose metabolic process"/>
    <property type="evidence" value="ECO:0007669"/>
    <property type="project" value="TreeGrafter"/>
</dbReference>
<dbReference type="GO" id="GO:0006094">
    <property type="term" value="P:gluconeogenesis"/>
    <property type="evidence" value="ECO:0007669"/>
    <property type="project" value="UniProtKB-UniRule"/>
</dbReference>
<dbReference type="GO" id="GO:0019253">
    <property type="term" value="P:reductive pentose-phosphate cycle"/>
    <property type="evidence" value="ECO:0007669"/>
    <property type="project" value="UniProtKB-UniRule"/>
</dbReference>
<dbReference type="GO" id="GO:0005986">
    <property type="term" value="P:sucrose biosynthetic process"/>
    <property type="evidence" value="ECO:0007669"/>
    <property type="project" value="TreeGrafter"/>
</dbReference>
<dbReference type="CDD" id="cd00354">
    <property type="entry name" value="FBPase"/>
    <property type="match status" value="1"/>
</dbReference>
<dbReference type="FunFam" id="3.30.540.10:FF:000002">
    <property type="entry name" value="Fructose-1,6-bisphosphatase class 1"/>
    <property type="match status" value="1"/>
</dbReference>
<dbReference type="FunFam" id="3.40.190.80:FF:000001">
    <property type="entry name" value="Fructose-1,6-bisphosphatase class 1"/>
    <property type="match status" value="1"/>
</dbReference>
<dbReference type="Gene3D" id="3.40.190.80">
    <property type="match status" value="1"/>
</dbReference>
<dbReference type="Gene3D" id="3.30.540.10">
    <property type="entry name" value="Fructose-1,6-Bisphosphatase, subunit A, domain 1"/>
    <property type="match status" value="1"/>
</dbReference>
<dbReference type="HAMAP" id="MF_01855">
    <property type="entry name" value="FBPase_class1"/>
    <property type="match status" value="1"/>
</dbReference>
<dbReference type="InterPro" id="IPR044015">
    <property type="entry name" value="FBPase_C_dom"/>
</dbReference>
<dbReference type="InterPro" id="IPR000146">
    <property type="entry name" value="FBPase_class-1"/>
</dbReference>
<dbReference type="InterPro" id="IPR033391">
    <property type="entry name" value="FBPase_N"/>
</dbReference>
<dbReference type="InterPro" id="IPR028343">
    <property type="entry name" value="FBPtase"/>
</dbReference>
<dbReference type="NCBIfam" id="NF006778">
    <property type="entry name" value="PRK09293.1-1"/>
    <property type="match status" value="1"/>
</dbReference>
<dbReference type="PANTHER" id="PTHR11556">
    <property type="entry name" value="FRUCTOSE-1,6-BISPHOSPHATASE-RELATED"/>
    <property type="match status" value="1"/>
</dbReference>
<dbReference type="PANTHER" id="PTHR11556:SF35">
    <property type="entry name" value="SEDOHEPTULOSE-1,7-BISPHOSPHATASE, CHLOROPLASTIC"/>
    <property type="match status" value="1"/>
</dbReference>
<dbReference type="Pfam" id="PF00316">
    <property type="entry name" value="FBPase"/>
    <property type="match status" value="1"/>
</dbReference>
<dbReference type="Pfam" id="PF18913">
    <property type="entry name" value="FBPase_C"/>
    <property type="match status" value="1"/>
</dbReference>
<dbReference type="PIRSF" id="PIRSF500210">
    <property type="entry name" value="FBPtase"/>
    <property type="match status" value="1"/>
</dbReference>
<dbReference type="PIRSF" id="PIRSF000904">
    <property type="entry name" value="FBPtase_SBPase"/>
    <property type="match status" value="1"/>
</dbReference>
<dbReference type="PRINTS" id="PR00115">
    <property type="entry name" value="F16BPHPHTASE"/>
</dbReference>
<dbReference type="SUPFAM" id="SSF56655">
    <property type="entry name" value="Carbohydrate phosphatase"/>
    <property type="match status" value="1"/>
</dbReference>
<keyword id="KW-0113">Calvin cycle</keyword>
<keyword id="KW-0119">Carbohydrate metabolism</keyword>
<keyword id="KW-0963">Cytoplasm</keyword>
<keyword id="KW-0378">Hydrolase</keyword>
<keyword id="KW-0460">Magnesium</keyword>
<keyword id="KW-0479">Metal-binding</keyword>
<keyword id="KW-1185">Reference proteome</keyword>